<keyword id="KW-0342">GTP-binding</keyword>
<keyword id="KW-0547">Nucleotide-binding</keyword>
<keyword id="KW-0677">Repeat</keyword>
<keyword id="KW-0690">Ribosome biogenesis</keyword>
<name>DER_ESCF3</name>
<dbReference type="EMBL" id="CU928158">
    <property type="protein sequence ID" value="CAQ88204.1"/>
    <property type="molecule type" value="Genomic_DNA"/>
</dbReference>
<dbReference type="RefSeq" id="WP_001317982.1">
    <property type="nucleotide sequence ID" value="NC_011740.1"/>
</dbReference>
<dbReference type="SMR" id="B7LKC7"/>
<dbReference type="GeneID" id="75058279"/>
<dbReference type="KEGG" id="efe:EFER_0661"/>
<dbReference type="HOGENOM" id="CLU_016077_6_2_6"/>
<dbReference type="OrthoDB" id="9805918at2"/>
<dbReference type="Proteomes" id="UP000000745">
    <property type="component" value="Chromosome"/>
</dbReference>
<dbReference type="GO" id="GO:0005525">
    <property type="term" value="F:GTP binding"/>
    <property type="evidence" value="ECO:0007669"/>
    <property type="project" value="UniProtKB-UniRule"/>
</dbReference>
<dbReference type="GO" id="GO:0043022">
    <property type="term" value="F:ribosome binding"/>
    <property type="evidence" value="ECO:0007669"/>
    <property type="project" value="TreeGrafter"/>
</dbReference>
<dbReference type="GO" id="GO:0042254">
    <property type="term" value="P:ribosome biogenesis"/>
    <property type="evidence" value="ECO:0007669"/>
    <property type="project" value="UniProtKB-KW"/>
</dbReference>
<dbReference type="CDD" id="cd01894">
    <property type="entry name" value="EngA1"/>
    <property type="match status" value="1"/>
</dbReference>
<dbReference type="CDD" id="cd01895">
    <property type="entry name" value="EngA2"/>
    <property type="match status" value="1"/>
</dbReference>
<dbReference type="FunFam" id="3.30.300.20:FF:000004">
    <property type="entry name" value="GTPase Der"/>
    <property type="match status" value="1"/>
</dbReference>
<dbReference type="FunFam" id="3.40.50.300:FF:000040">
    <property type="entry name" value="GTPase Der"/>
    <property type="match status" value="1"/>
</dbReference>
<dbReference type="FunFam" id="3.40.50.300:FF:000057">
    <property type="entry name" value="GTPase Der"/>
    <property type="match status" value="1"/>
</dbReference>
<dbReference type="Gene3D" id="3.30.300.20">
    <property type="match status" value="1"/>
</dbReference>
<dbReference type="Gene3D" id="3.40.50.300">
    <property type="entry name" value="P-loop containing nucleotide triphosphate hydrolases"/>
    <property type="match status" value="2"/>
</dbReference>
<dbReference type="HAMAP" id="MF_00195">
    <property type="entry name" value="GTPase_Der"/>
    <property type="match status" value="1"/>
</dbReference>
<dbReference type="InterPro" id="IPR031166">
    <property type="entry name" value="G_ENGA"/>
</dbReference>
<dbReference type="InterPro" id="IPR006073">
    <property type="entry name" value="GTP-bd"/>
</dbReference>
<dbReference type="InterPro" id="IPR016484">
    <property type="entry name" value="GTPase_Der"/>
</dbReference>
<dbReference type="InterPro" id="IPR032859">
    <property type="entry name" value="KH_dom-like"/>
</dbReference>
<dbReference type="InterPro" id="IPR015946">
    <property type="entry name" value="KH_dom-like_a/b"/>
</dbReference>
<dbReference type="InterPro" id="IPR027417">
    <property type="entry name" value="P-loop_NTPase"/>
</dbReference>
<dbReference type="InterPro" id="IPR005225">
    <property type="entry name" value="Small_GTP-bd"/>
</dbReference>
<dbReference type="NCBIfam" id="TIGR03594">
    <property type="entry name" value="GTPase_EngA"/>
    <property type="match status" value="1"/>
</dbReference>
<dbReference type="NCBIfam" id="TIGR00231">
    <property type="entry name" value="small_GTP"/>
    <property type="match status" value="2"/>
</dbReference>
<dbReference type="PANTHER" id="PTHR43834">
    <property type="entry name" value="GTPASE DER"/>
    <property type="match status" value="1"/>
</dbReference>
<dbReference type="PANTHER" id="PTHR43834:SF6">
    <property type="entry name" value="GTPASE DER"/>
    <property type="match status" value="1"/>
</dbReference>
<dbReference type="Pfam" id="PF14714">
    <property type="entry name" value="KH_dom-like"/>
    <property type="match status" value="1"/>
</dbReference>
<dbReference type="Pfam" id="PF01926">
    <property type="entry name" value="MMR_HSR1"/>
    <property type="match status" value="2"/>
</dbReference>
<dbReference type="PIRSF" id="PIRSF006485">
    <property type="entry name" value="GTP-binding_EngA"/>
    <property type="match status" value="1"/>
</dbReference>
<dbReference type="PRINTS" id="PR00326">
    <property type="entry name" value="GTP1OBG"/>
</dbReference>
<dbReference type="SUPFAM" id="SSF52540">
    <property type="entry name" value="P-loop containing nucleoside triphosphate hydrolases"/>
    <property type="match status" value="2"/>
</dbReference>
<dbReference type="PROSITE" id="PS51712">
    <property type="entry name" value="G_ENGA"/>
    <property type="match status" value="2"/>
</dbReference>
<comment type="function">
    <text evidence="1">GTPase that plays an essential role in the late steps of ribosome biogenesis.</text>
</comment>
<comment type="subunit">
    <text evidence="1">Associates with the 50S ribosomal subunit.</text>
</comment>
<comment type="similarity">
    <text evidence="1">Belongs to the TRAFAC class TrmE-Era-EngA-EngB-Septin-like GTPase superfamily. EngA (Der) GTPase family.</text>
</comment>
<accession>B7LKC7</accession>
<organism>
    <name type="scientific">Escherichia fergusonii (strain ATCC 35469 / DSM 13698 / CCUG 18766 / IAM 14443 / JCM 21226 / LMG 7866 / NBRC 102419 / NCTC 12128 / CDC 0568-73)</name>
    <dbReference type="NCBI Taxonomy" id="585054"/>
    <lineage>
        <taxon>Bacteria</taxon>
        <taxon>Pseudomonadati</taxon>
        <taxon>Pseudomonadota</taxon>
        <taxon>Gammaproteobacteria</taxon>
        <taxon>Enterobacterales</taxon>
        <taxon>Enterobacteriaceae</taxon>
        <taxon>Escherichia</taxon>
    </lineage>
</organism>
<proteinExistence type="inferred from homology"/>
<gene>
    <name evidence="1" type="primary">der</name>
    <name type="synonym">engA</name>
    <name type="ordered locus">EFER_0661</name>
</gene>
<reference key="1">
    <citation type="journal article" date="2009" name="PLoS Genet.">
        <title>Organised genome dynamics in the Escherichia coli species results in highly diverse adaptive paths.</title>
        <authorList>
            <person name="Touchon M."/>
            <person name="Hoede C."/>
            <person name="Tenaillon O."/>
            <person name="Barbe V."/>
            <person name="Baeriswyl S."/>
            <person name="Bidet P."/>
            <person name="Bingen E."/>
            <person name="Bonacorsi S."/>
            <person name="Bouchier C."/>
            <person name="Bouvet O."/>
            <person name="Calteau A."/>
            <person name="Chiapello H."/>
            <person name="Clermont O."/>
            <person name="Cruveiller S."/>
            <person name="Danchin A."/>
            <person name="Diard M."/>
            <person name="Dossat C."/>
            <person name="Karoui M.E."/>
            <person name="Frapy E."/>
            <person name="Garry L."/>
            <person name="Ghigo J.M."/>
            <person name="Gilles A.M."/>
            <person name="Johnson J."/>
            <person name="Le Bouguenec C."/>
            <person name="Lescat M."/>
            <person name="Mangenot S."/>
            <person name="Martinez-Jehanne V."/>
            <person name="Matic I."/>
            <person name="Nassif X."/>
            <person name="Oztas S."/>
            <person name="Petit M.A."/>
            <person name="Pichon C."/>
            <person name="Rouy Z."/>
            <person name="Ruf C.S."/>
            <person name="Schneider D."/>
            <person name="Tourret J."/>
            <person name="Vacherie B."/>
            <person name="Vallenet D."/>
            <person name="Medigue C."/>
            <person name="Rocha E.P.C."/>
            <person name="Denamur E."/>
        </authorList>
    </citation>
    <scope>NUCLEOTIDE SEQUENCE [LARGE SCALE GENOMIC DNA]</scope>
    <source>
        <strain>ATCC 35469 / DSM 13698 / BCRC 15582 / CCUG 18766 / IAM 14443 / JCM 21226 / LMG 7866 / NBRC 102419 / NCTC 12128 / CDC 0568-73</strain>
    </source>
</reference>
<protein>
    <recommendedName>
        <fullName evidence="1">GTPase Der</fullName>
    </recommendedName>
    <alternativeName>
        <fullName evidence="1">GTP-binding protein EngA</fullName>
    </alternativeName>
</protein>
<feature type="chain" id="PRO_1000118648" description="GTPase Der">
    <location>
        <begin position="1"/>
        <end position="490"/>
    </location>
</feature>
<feature type="domain" description="EngA-type G 1">
    <location>
        <begin position="3"/>
        <end position="166"/>
    </location>
</feature>
<feature type="domain" description="EngA-type G 2">
    <location>
        <begin position="203"/>
        <end position="376"/>
    </location>
</feature>
<feature type="domain" description="KH-like" evidence="1">
    <location>
        <begin position="377"/>
        <end position="461"/>
    </location>
</feature>
<feature type="binding site" evidence="1">
    <location>
        <begin position="9"/>
        <end position="16"/>
    </location>
    <ligand>
        <name>GTP</name>
        <dbReference type="ChEBI" id="CHEBI:37565"/>
        <label>1</label>
    </ligand>
</feature>
<feature type="binding site" evidence="1">
    <location>
        <begin position="56"/>
        <end position="60"/>
    </location>
    <ligand>
        <name>GTP</name>
        <dbReference type="ChEBI" id="CHEBI:37565"/>
        <label>1</label>
    </ligand>
</feature>
<feature type="binding site" evidence="1">
    <location>
        <begin position="118"/>
        <end position="121"/>
    </location>
    <ligand>
        <name>GTP</name>
        <dbReference type="ChEBI" id="CHEBI:37565"/>
        <label>1</label>
    </ligand>
</feature>
<feature type="binding site" evidence="1">
    <location>
        <begin position="209"/>
        <end position="216"/>
    </location>
    <ligand>
        <name>GTP</name>
        <dbReference type="ChEBI" id="CHEBI:37565"/>
        <label>2</label>
    </ligand>
</feature>
<feature type="binding site" evidence="1">
    <location>
        <begin position="256"/>
        <end position="260"/>
    </location>
    <ligand>
        <name>GTP</name>
        <dbReference type="ChEBI" id="CHEBI:37565"/>
        <label>2</label>
    </ligand>
</feature>
<feature type="binding site" evidence="1">
    <location>
        <begin position="321"/>
        <end position="324"/>
    </location>
    <ligand>
        <name>GTP</name>
        <dbReference type="ChEBI" id="CHEBI:37565"/>
        <label>2</label>
    </ligand>
</feature>
<evidence type="ECO:0000255" key="1">
    <source>
        <dbReference type="HAMAP-Rule" id="MF_00195"/>
    </source>
</evidence>
<sequence length="490" mass="55023">MVPVVALVGRPNVGKSTLFNRLTRTRDALVADFPGLTRDRKYGRAEIEGREFICIDTGGIDGTEDGVETRMAEQSLLAIEEADVVLFMVDARAGLMPADEAIAKHLRSREKPTFLVANKTDGLDPDQAVVDFYSLGLGEIYPIAASHGRGVLSLLEHVLLPWMEDLAPQEEVDEDAEYWAQFEAEENGEEEEEDDFDPQSLPIKLAIVGRPNVGKSTLTNRILGEERVVVYDMPGTTRDSIYIPMERDGREYVLIDTAGVRKRGKITDAVEKFSVIKTLQAIEDANVVMLVIDAREGISDQDLSLLGFILNSGRSLVIVVNKWDGLSQEVKEQVKETLDFRLGFIDFARVHFISALHGSGVGNLFESVREAYDSSTRRVGTSMLTRIMTMAVEDHQPPLVRGRRVKLKYAHAGGYNPPIVVIHGNQVKDLPDSYKRYLMNYFRKSLDVMGTPIRIQFKEGENPYANKRNTLTPTQMRKRKRLMKHIKKSK</sequence>